<protein>
    <recommendedName>
        <fullName evidence="1">Sulfate adenylyltransferase subunit 2</fullName>
        <ecNumber evidence="1">2.7.7.4</ecNumber>
    </recommendedName>
    <alternativeName>
        <fullName evidence="1">ATP-sulfurylase small subunit</fullName>
    </alternativeName>
    <alternativeName>
        <fullName evidence="1">Sulfate adenylate transferase</fullName>
        <shortName evidence="1">SAT</shortName>
    </alternativeName>
</protein>
<keyword id="KW-0067">ATP-binding</keyword>
<keyword id="KW-0547">Nucleotide-binding</keyword>
<keyword id="KW-0548">Nucleotidyltransferase</keyword>
<keyword id="KW-0808">Transferase</keyword>
<accession>Q87SY0</accession>
<evidence type="ECO:0000255" key="1">
    <source>
        <dbReference type="HAMAP-Rule" id="MF_00064"/>
    </source>
</evidence>
<evidence type="ECO:0000256" key="2">
    <source>
        <dbReference type="SAM" id="MobiDB-lite"/>
    </source>
</evidence>
<reference key="1">
    <citation type="journal article" date="2003" name="Lancet">
        <title>Genome sequence of Vibrio parahaemolyticus: a pathogenic mechanism distinct from that of V. cholerae.</title>
        <authorList>
            <person name="Makino K."/>
            <person name="Oshima K."/>
            <person name="Kurokawa K."/>
            <person name="Yokoyama K."/>
            <person name="Uda T."/>
            <person name="Tagomori K."/>
            <person name="Iijima Y."/>
            <person name="Najima M."/>
            <person name="Nakano M."/>
            <person name="Yamashita A."/>
            <person name="Kubota Y."/>
            <person name="Kimura S."/>
            <person name="Yasunaga T."/>
            <person name="Honda T."/>
            <person name="Shinagawa H."/>
            <person name="Hattori M."/>
            <person name="Iida T."/>
        </authorList>
    </citation>
    <scope>NUCLEOTIDE SEQUENCE [LARGE SCALE GENOMIC DNA]</scope>
    <source>
        <strain>RIMD 2210633</strain>
    </source>
</reference>
<feature type="chain" id="PRO_0000100678" description="Sulfate adenylyltransferase subunit 2">
    <location>
        <begin position="1"/>
        <end position="302"/>
    </location>
</feature>
<feature type="region of interest" description="Disordered" evidence="2">
    <location>
        <begin position="280"/>
        <end position="302"/>
    </location>
</feature>
<dbReference type="EC" id="2.7.7.4" evidence="1"/>
<dbReference type="EMBL" id="BA000031">
    <property type="protein sequence ID" value="BAC58555.1"/>
    <property type="molecule type" value="Genomic_DNA"/>
</dbReference>
<dbReference type="RefSeq" id="NP_796671.1">
    <property type="nucleotide sequence ID" value="NC_004603.1"/>
</dbReference>
<dbReference type="RefSeq" id="WP_005454659.1">
    <property type="nucleotide sequence ID" value="NC_004603.1"/>
</dbReference>
<dbReference type="SMR" id="Q87SY0"/>
<dbReference type="GeneID" id="1187759"/>
<dbReference type="KEGG" id="vpa:VP0292"/>
<dbReference type="PATRIC" id="fig|223926.6.peg.283"/>
<dbReference type="eggNOG" id="COG0175">
    <property type="taxonomic scope" value="Bacteria"/>
</dbReference>
<dbReference type="HOGENOM" id="CLU_043026_0_0_6"/>
<dbReference type="UniPathway" id="UPA00140">
    <property type="reaction ID" value="UER00204"/>
</dbReference>
<dbReference type="Proteomes" id="UP000002493">
    <property type="component" value="Chromosome 1"/>
</dbReference>
<dbReference type="GO" id="GO:0005524">
    <property type="term" value="F:ATP binding"/>
    <property type="evidence" value="ECO:0007669"/>
    <property type="project" value="UniProtKB-KW"/>
</dbReference>
<dbReference type="GO" id="GO:0004781">
    <property type="term" value="F:sulfate adenylyltransferase (ATP) activity"/>
    <property type="evidence" value="ECO:0007669"/>
    <property type="project" value="UniProtKB-UniRule"/>
</dbReference>
<dbReference type="GO" id="GO:0070814">
    <property type="term" value="P:hydrogen sulfide biosynthetic process"/>
    <property type="evidence" value="ECO:0007669"/>
    <property type="project" value="UniProtKB-UniRule"/>
</dbReference>
<dbReference type="GO" id="GO:0000103">
    <property type="term" value="P:sulfate assimilation"/>
    <property type="evidence" value="ECO:0007669"/>
    <property type="project" value="UniProtKB-UniRule"/>
</dbReference>
<dbReference type="CDD" id="cd23946">
    <property type="entry name" value="Sulfate_adenylyltransferase_2"/>
    <property type="match status" value="1"/>
</dbReference>
<dbReference type="FunFam" id="3.40.50.620:FF:000002">
    <property type="entry name" value="Sulfate adenylyltransferase subunit 2"/>
    <property type="match status" value="1"/>
</dbReference>
<dbReference type="Gene3D" id="3.40.50.620">
    <property type="entry name" value="HUPs"/>
    <property type="match status" value="1"/>
</dbReference>
<dbReference type="HAMAP" id="MF_00064">
    <property type="entry name" value="Sulf_adenylyltr_sub2"/>
    <property type="match status" value="1"/>
</dbReference>
<dbReference type="InterPro" id="IPR002500">
    <property type="entry name" value="PAPS_reduct_dom"/>
</dbReference>
<dbReference type="InterPro" id="IPR014729">
    <property type="entry name" value="Rossmann-like_a/b/a_fold"/>
</dbReference>
<dbReference type="InterPro" id="IPR011784">
    <property type="entry name" value="SO4_adenylTrfase_ssu"/>
</dbReference>
<dbReference type="InterPro" id="IPR050128">
    <property type="entry name" value="Sulfate_adenylyltrnsfr_sub2"/>
</dbReference>
<dbReference type="NCBIfam" id="TIGR02039">
    <property type="entry name" value="CysD"/>
    <property type="match status" value="1"/>
</dbReference>
<dbReference type="NCBIfam" id="NF003587">
    <property type="entry name" value="PRK05253.1"/>
    <property type="match status" value="1"/>
</dbReference>
<dbReference type="NCBIfam" id="NF009214">
    <property type="entry name" value="PRK12563.1"/>
    <property type="match status" value="1"/>
</dbReference>
<dbReference type="PANTHER" id="PTHR43196">
    <property type="entry name" value="SULFATE ADENYLYLTRANSFERASE SUBUNIT 2"/>
    <property type="match status" value="1"/>
</dbReference>
<dbReference type="PANTHER" id="PTHR43196:SF1">
    <property type="entry name" value="SULFATE ADENYLYLTRANSFERASE SUBUNIT 2"/>
    <property type="match status" value="1"/>
</dbReference>
<dbReference type="Pfam" id="PF01507">
    <property type="entry name" value="PAPS_reduct"/>
    <property type="match status" value="1"/>
</dbReference>
<dbReference type="PIRSF" id="PIRSF002936">
    <property type="entry name" value="CysDAde_trans"/>
    <property type="match status" value="1"/>
</dbReference>
<dbReference type="SUPFAM" id="SSF52402">
    <property type="entry name" value="Adenine nucleotide alpha hydrolases-like"/>
    <property type="match status" value="1"/>
</dbReference>
<proteinExistence type="inferred from homology"/>
<organism>
    <name type="scientific">Vibrio parahaemolyticus serotype O3:K6 (strain RIMD 2210633)</name>
    <dbReference type="NCBI Taxonomy" id="223926"/>
    <lineage>
        <taxon>Bacteria</taxon>
        <taxon>Pseudomonadati</taxon>
        <taxon>Pseudomonadota</taxon>
        <taxon>Gammaproteobacteria</taxon>
        <taxon>Vibrionales</taxon>
        <taxon>Vibrionaceae</taxon>
        <taxon>Vibrio</taxon>
    </lineage>
</organism>
<sequence>MDQQRLTHLKQLEAESIHIIREVAAEFDNPVMMYSIGKDSSVMLHLARKAFYPGKIPFPLLHVDTDWKFREMIEFRDRTAEKYGFELLVHKNPEGIAMGCSPFVHGSSKHTDIMKTQGLKQALNKYGFDAAFGGARRDEEKSRAKERVYSFRDKNHTWDPKNQRPELWKTYNGQVNKGESIRVFPLSNWTELDIWQYIYLENIEIVPLYLADKRPVVERDGMLIMVDDDRMELQPGEVIEEKSVRFRTLGCYPLTGAIESEANTLTGIIEEMLVATSSERQGRAIDHDQSGSMELKKRQGYF</sequence>
<gene>
    <name evidence="1" type="primary">cysD</name>
    <name type="ordered locus">VP0292</name>
</gene>
<comment type="function">
    <text evidence="1">With CysN forms the ATP sulfurylase (ATPS) that catalyzes the adenylation of sulfate producing adenosine 5'-phosphosulfate (APS) and diphosphate, the first enzymatic step in sulfur assimilation pathway. APS synthesis involves the formation of a high-energy phosphoric-sulfuric acid anhydride bond driven by GTP hydrolysis by CysN coupled to ATP hydrolysis by CysD.</text>
</comment>
<comment type="catalytic activity">
    <reaction evidence="1">
        <text>sulfate + ATP + H(+) = adenosine 5'-phosphosulfate + diphosphate</text>
        <dbReference type="Rhea" id="RHEA:18133"/>
        <dbReference type="ChEBI" id="CHEBI:15378"/>
        <dbReference type="ChEBI" id="CHEBI:16189"/>
        <dbReference type="ChEBI" id="CHEBI:30616"/>
        <dbReference type="ChEBI" id="CHEBI:33019"/>
        <dbReference type="ChEBI" id="CHEBI:58243"/>
        <dbReference type="EC" id="2.7.7.4"/>
    </reaction>
</comment>
<comment type="pathway">
    <text evidence="1">Sulfur metabolism; hydrogen sulfide biosynthesis; sulfite from sulfate: step 1/3.</text>
</comment>
<comment type="subunit">
    <text evidence="1">Heterodimer composed of CysD, the smaller subunit, and CysN.</text>
</comment>
<comment type="similarity">
    <text evidence="1">Belongs to the PAPS reductase family. CysD subfamily.</text>
</comment>
<name>CYSD_VIBPA</name>